<sequence length="187" mass="20894">MYMQVETRTSTRLHLKRAPGIRSWSLLVGILSTGLAAAYYSGDSLGWKLFYVTGCLFVAVQNLEDWEEAIFNKSTGKVILKTFSLYKKLLTLLRAGHDQVVVLLKDIQDVNVEEEKVRYFGKGYMVVLRFATGFSHPLTQSAVMGRRSDVEAIAKLITSFLELHRLESPSERSQSSDSEPDGPGGQS</sequence>
<dbReference type="EMBL" id="BC079126">
    <property type="protein sequence ID" value="AAH79126.1"/>
    <property type="molecule type" value="mRNA"/>
</dbReference>
<dbReference type="RefSeq" id="NP_001030131.1">
    <property type="nucleotide sequence ID" value="NM_001034959.1"/>
</dbReference>
<dbReference type="RefSeq" id="XP_063125865.1">
    <property type="nucleotide sequence ID" value="XM_063269795.1"/>
</dbReference>
<dbReference type="SMR" id="Q6AYA6"/>
<dbReference type="FunCoup" id="Q6AYA6">
    <property type="interactions" value="1994"/>
</dbReference>
<dbReference type="IntAct" id="Q6AYA6">
    <property type="interactions" value="1"/>
</dbReference>
<dbReference type="STRING" id="10116.ENSRNOP00000051805"/>
<dbReference type="iPTMnet" id="Q6AYA6"/>
<dbReference type="PhosphoSitePlus" id="Q6AYA6"/>
<dbReference type="jPOST" id="Q6AYA6"/>
<dbReference type="PaxDb" id="10116-ENSRNOP00000051805"/>
<dbReference type="Ensembl" id="ENSRNOT00000054922.3">
    <property type="protein sequence ID" value="ENSRNOP00000051805.2"/>
    <property type="gene ID" value="ENSRNOG00000036666.3"/>
</dbReference>
<dbReference type="GeneID" id="619574"/>
<dbReference type="KEGG" id="rno:619574"/>
<dbReference type="AGR" id="RGD:1562022"/>
<dbReference type="CTD" id="79415"/>
<dbReference type="RGD" id="1562022">
    <property type="gene designation" value="Cybc1"/>
</dbReference>
<dbReference type="eggNOG" id="ENOG502S06T">
    <property type="taxonomic scope" value="Eukaryota"/>
</dbReference>
<dbReference type="GeneTree" id="ENSGT00390000004691"/>
<dbReference type="HOGENOM" id="CLU_100734_0_0_1"/>
<dbReference type="InParanoid" id="Q6AYA6"/>
<dbReference type="OMA" id="WKLFYIT"/>
<dbReference type="OrthoDB" id="41002at9989"/>
<dbReference type="PhylomeDB" id="Q6AYA6"/>
<dbReference type="TreeFam" id="TF332389"/>
<dbReference type="PRO" id="PR:Q6AYA6"/>
<dbReference type="Proteomes" id="UP000002494">
    <property type="component" value="Chromosome 10"/>
</dbReference>
<dbReference type="Bgee" id="ENSRNOG00000036666">
    <property type="expression patterns" value="Expressed in spleen and 20 other cell types or tissues"/>
</dbReference>
<dbReference type="GO" id="GO:0005783">
    <property type="term" value="C:endoplasmic reticulum"/>
    <property type="evidence" value="ECO:0000250"/>
    <property type="project" value="UniProtKB"/>
</dbReference>
<dbReference type="GO" id="GO:0005789">
    <property type="term" value="C:endoplasmic reticulum membrane"/>
    <property type="evidence" value="ECO:0007669"/>
    <property type="project" value="UniProtKB-SubCell"/>
</dbReference>
<dbReference type="GO" id="GO:0045087">
    <property type="term" value="P:innate immune response"/>
    <property type="evidence" value="ECO:0000250"/>
    <property type="project" value="UniProtKB"/>
</dbReference>
<dbReference type="GO" id="GO:0045728">
    <property type="term" value="P:respiratory burst after phagocytosis"/>
    <property type="evidence" value="ECO:0000250"/>
    <property type="project" value="UniProtKB"/>
</dbReference>
<dbReference type="InterPro" id="IPR027846">
    <property type="entry name" value="Cybc1"/>
</dbReference>
<dbReference type="PANTHER" id="PTHR31837">
    <property type="entry name" value="CYTOCHROME B-245 CHAPERONE 1"/>
    <property type="match status" value="1"/>
</dbReference>
<dbReference type="PANTHER" id="PTHR31837:SF3">
    <property type="entry name" value="CYTOCHROME B-245 CHAPERONE 1"/>
    <property type="match status" value="1"/>
</dbReference>
<dbReference type="Pfam" id="PF15169">
    <property type="entry name" value="Cybc1_Eros"/>
    <property type="match status" value="1"/>
</dbReference>
<comment type="function">
    <text evidence="1 2">Functions as a chaperone necessary for a stable expression of the CYBA and CYBB subunits of the cytochrome b-245 heterodimer (By similarity). Controls the phagocyte respiratory burst and is essential for innate immunity (By similarity).</text>
</comment>
<comment type="subunit">
    <text evidence="2">Interacts with CYBB; CYBC1 may act as a chaperone stabilizing Cytochrome b-245 heterodimer.</text>
</comment>
<comment type="subcellular location">
    <subcellularLocation>
        <location evidence="2">Endoplasmic reticulum membrane</location>
        <topology evidence="5">Single-pass membrane protein</topology>
    </subcellularLocation>
</comment>
<comment type="similarity">
    <text>Belongs to the CYBC1 family.</text>
</comment>
<reference key="1">
    <citation type="journal article" date="2004" name="Genome Res.">
        <title>The status, quality, and expansion of the NIH full-length cDNA project: the Mammalian Gene Collection (MGC).</title>
        <authorList>
            <consortium name="The MGC Project Team"/>
        </authorList>
    </citation>
    <scope>NUCLEOTIDE SEQUENCE [LARGE SCALE MRNA]</scope>
    <source>
        <strain>Brown Norway</strain>
        <tissue>Kidney</tissue>
    </source>
</reference>
<reference key="2">
    <citation type="journal article" date="2012" name="Nat. Commun.">
        <title>Quantitative maps of protein phosphorylation sites across 14 different rat organs and tissues.</title>
        <authorList>
            <person name="Lundby A."/>
            <person name="Secher A."/>
            <person name="Lage K."/>
            <person name="Nordsborg N.B."/>
            <person name="Dmytriyev A."/>
            <person name="Lundby C."/>
            <person name="Olsen J.V."/>
        </authorList>
    </citation>
    <scope>PHOSPHORYLATION [LARGE SCALE ANALYSIS] AT SER-168 AND SER-170</scope>
    <scope>IDENTIFICATION BY MASS SPECTROMETRY [LARGE SCALE ANALYSIS]</scope>
</reference>
<name>CYBC1_RAT</name>
<feature type="chain" id="PRO_0000281420" description="Cytochrome b-245 chaperone 1">
    <location>
        <begin position="1"/>
        <end position="187"/>
    </location>
</feature>
<feature type="transmembrane region" description="Helical" evidence="3">
    <location>
        <begin position="20"/>
        <end position="42"/>
    </location>
</feature>
<feature type="region of interest" description="Disordered" evidence="4">
    <location>
        <begin position="167"/>
        <end position="187"/>
    </location>
</feature>
<feature type="modified residue" description="Phosphoserine" evidence="7">
    <location>
        <position position="168"/>
    </location>
</feature>
<feature type="modified residue" description="Phosphoserine" evidence="7">
    <location>
        <position position="170"/>
    </location>
</feature>
<evidence type="ECO:0000250" key="1">
    <source>
        <dbReference type="UniProtKB" id="Q3TYS2"/>
    </source>
</evidence>
<evidence type="ECO:0000250" key="2">
    <source>
        <dbReference type="UniProtKB" id="Q9BQA9"/>
    </source>
</evidence>
<evidence type="ECO:0000255" key="3"/>
<evidence type="ECO:0000256" key="4">
    <source>
        <dbReference type="SAM" id="MobiDB-lite"/>
    </source>
</evidence>
<evidence type="ECO:0000305" key="5"/>
<evidence type="ECO:0000312" key="6">
    <source>
        <dbReference type="RGD" id="1562022"/>
    </source>
</evidence>
<evidence type="ECO:0007744" key="7">
    <source>
    </source>
</evidence>
<gene>
    <name evidence="6" type="primary">Cybc1</name>
    <name evidence="1" type="synonym">Eros</name>
</gene>
<protein>
    <recommendedName>
        <fullName evidence="5">Cytochrome b-245 chaperone 1</fullName>
    </recommendedName>
    <alternativeName>
        <fullName evidence="1">Essential for reactive oxygen species protein</fullName>
        <shortName evidence="1">Eros</shortName>
    </alternativeName>
</protein>
<proteinExistence type="evidence at protein level"/>
<accession>Q6AYA6</accession>
<keyword id="KW-0143">Chaperone</keyword>
<keyword id="KW-0256">Endoplasmic reticulum</keyword>
<keyword id="KW-0391">Immunity</keyword>
<keyword id="KW-0399">Innate immunity</keyword>
<keyword id="KW-0472">Membrane</keyword>
<keyword id="KW-0597">Phosphoprotein</keyword>
<keyword id="KW-1185">Reference proteome</keyword>
<keyword id="KW-0812">Transmembrane</keyword>
<keyword id="KW-1133">Transmembrane helix</keyword>
<organism>
    <name type="scientific">Rattus norvegicus</name>
    <name type="common">Rat</name>
    <dbReference type="NCBI Taxonomy" id="10116"/>
    <lineage>
        <taxon>Eukaryota</taxon>
        <taxon>Metazoa</taxon>
        <taxon>Chordata</taxon>
        <taxon>Craniata</taxon>
        <taxon>Vertebrata</taxon>
        <taxon>Euteleostomi</taxon>
        <taxon>Mammalia</taxon>
        <taxon>Eutheria</taxon>
        <taxon>Euarchontoglires</taxon>
        <taxon>Glires</taxon>
        <taxon>Rodentia</taxon>
        <taxon>Myomorpha</taxon>
        <taxon>Muroidea</taxon>
        <taxon>Muridae</taxon>
        <taxon>Murinae</taxon>
        <taxon>Rattus</taxon>
    </lineage>
</organism>